<gene>
    <name type="ordered locus">SZO_09140</name>
</gene>
<protein>
    <recommendedName>
        <fullName>UPF0758 protein SZO_09140</fullName>
    </recommendedName>
</protein>
<comment type="similarity">
    <text evidence="2">Belongs to the UPF0758 family.</text>
</comment>
<sequence length="225" mass="25497">MYSIKTDHKLMPRERLIRLGPEKLSNQELLAILLRTGNKEKHVLELSAYLLSSLDSLADLKKFSLQELQRLSGIGKVKAIEIKAMLELADRIQIAGQAVADPVLSSAQVAEKMMIELGDKQQEHLVAIYLDSQNKIIEEKTIFIGTVRKSIAEPREILYYACKNMATSLIVVHNHPSGLTKPSANDYHFTEKIKRSCDYLGLICLDHIIVSKHGYYSFREKSDLF</sequence>
<name>Y914_STRS7</name>
<evidence type="ECO:0000255" key="1">
    <source>
        <dbReference type="PROSITE-ProRule" id="PRU01182"/>
    </source>
</evidence>
<evidence type="ECO:0000305" key="2"/>
<reference key="1">
    <citation type="journal article" date="2009" name="PLoS Pathog.">
        <title>Genomic evidence for the evolution of Streptococcus equi: host restriction, increased virulence, and genetic exchange with human pathogens.</title>
        <authorList>
            <person name="Holden M.T.G."/>
            <person name="Heather Z."/>
            <person name="Paillot R."/>
            <person name="Steward K.F."/>
            <person name="Webb K."/>
            <person name="Ainslie F."/>
            <person name="Jourdan T."/>
            <person name="Bason N.C."/>
            <person name="Holroyd N.E."/>
            <person name="Mungall K."/>
            <person name="Quail M.A."/>
            <person name="Sanders M."/>
            <person name="Simmonds M."/>
            <person name="Willey D."/>
            <person name="Brooks K."/>
            <person name="Aanensen D.M."/>
            <person name="Spratt B.G."/>
            <person name="Jolley K.A."/>
            <person name="Maiden M.C.J."/>
            <person name="Kehoe M."/>
            <person name="Chanter N."/>
            <person name="Bentley S.D."/>
            <person name="Robinson C."/>
            <person name="Maskell D.J."/>
            <person name="Parkhill J."/>
            <person name="Waller A.S."/>
        </authorList>
    </citation>
    <scope>NUCLEOTIDE SEQUENCE [LARGE SCALE GENOMIC DNA]</scope>
    <source>
        <strain>H70</strain>
    </source>
</reference>
<organism>
    <name type="scientific">Streptococcus equi subsp. zooepidemicus (strain H70)</name>
    <dbReference type="NCBI Taxonomy" id="553483"/>
    <lineage>
        <taxon>Bacteria</taxon>
        <taxon>Bacillati</taxon>
        <taxon>Bacillota</taxon>
        <taxon>Bacilli</taxon>
        <taxon>Lactobacillales</taxon>
        <taxon>Streptococcaceae</taxon>
        <taxon>Streptococcus</taxon>
    </lineage>
</organism>
<proteinExistence type="inferred from homology"/>
<keyword id="KW-0378">Hydrolase</keyword>
<keyword id="KW-0479">Metal-binding</keyword>
<keyword id="KW-0482">Metalloprotease</keyword>
<keyword id="KW-0645">Protease</keyword>
<keyword id="KW-0862">Zinc</keyword>
<dbReference type="EMBL" id="FM204884">
    <property type="protein sequence ID" value="CAW99162.1"/>
    <property type="molecule type" value="Genomic_DNA"/>
</dbReference>
<dbReference type="SMR" id="C0MEY7"/>
<dbReference type="KEGG" id="seq:SZO_09140"/>
<dbReference type="eggNOG" id="COG2003">
    <property type="taxonomic scope" value="Bacteria"/>
</dbReference>
<dbReference type="HOGENOM" id="CLU_073529_0_2_9"/>
<dbReference type="Proteomes" id="UP000001368">
    <property type="component" value="Chromosome"/>
</dbReference>
<dbReference type="GO" id="GO:0046872">
    <property type="term" value="F:metal ion binding"/>
    <property type="evidence" value="ECO:0007669"/>
    <property type="project" value="UniProtKB-KW"/>
</dbReference>
<dbReference type="GO" id="GO:0008237">
    <property type="term" value="F:metallopeptidase activity"/>
    <property type="evidence" value="ECO:0007669"/>
    <property type="project" value="UniProtKB-KW"/>
</dbReference>
<dbReference type="GO" id="GO:0006508">
    <property type="term" value="P:proteolysis"/>
    <property type="evidence" value="ECO:0007669"/>
    <property type="project" value="UniProtKB-KW"/>
</dbReference>
<dbReference type="CDD" id="cd08071">
    <property type="entry name" value="MPN_DUF2466"/>
    <property type="match status" value="1"/>
</dbReference>
<dbReference type="Gene3D" id="3.40.140.10">
    <property type="entry name" value="Cytidine Deaminase, domain 2"/>
    <property type="match status" value="1"/>
</dbReference>
<dbReference type="InterPro" id="IPR037518">
    <property type="entry name" value="MPN"/>
</dbReference>
<dbReference type="InterPro" id="IPR025657">
    <property type="entry name" value="RadC_JAB"/>
</dbReference>
<dbReference type="InterPro" id="IPR010994">
    <property type="entry name" value="RuvA_2-like"/>
</dbReference>
<dbReference type="InterPro" id="IPR001405">
    <property type="entry name" value="UPF0758"/>
</dbReference>
<dbReference type="InterPro" id="IPR020891">
    <property type="entry name" value="UPF0758_CS"/>
</dbReference>
<dbReference type="InterPro" id="IPR046778">
    <property type="entry name" value="UPF0758_N"/>
</dbReference>
<dbReference type="NCBIfam" id="NF000642">
    <property type="entry name" value="PRK00024.1"/>
    <property type="match status" value="1"/>
</dbReference>
<dbReference type="NCBIfam" id="TIGR00608">
    <property type="entry name" value="radc"/>
    <property type="match status" value="1"/>
</dbReference>
<dbReference type="PANTHER" id="PTHR30471">
    <property type="entry name" value="DNA REPAIR PROTEIN RADC"/>
    <property type="match status" value="1"/>
</dbReference>
<dbReference type="PANTHER" id="PTHR30471:SF3">
    <property type="entry name" value="UPF0758 PROTEIN YEES-RELATED"/>
    <property type="match status" value="1"/>
</dbReference>
<dbReference type="Pfam" id="PF04002">
    <property type="entry name" value="RadC"/>
    <property type="match status" value="1"/>
</dbReference>
<dbReference type="Pfam" id="PF20582">
    <property type="entry name" value="UPF0758_N"/>
    <property type="match status" value="1"/>
</dbReference>
<dbReference type="SUPFAM" id="SSF47781">
    <property type="entry name" value="RuvA domain 2-like"/>
    <property type="match status" value="1"/>
</dbReference>
<dbReference type="PROSITE" id="PS50249">
    <property type="entry name" value="MPN"/>
    <property type="match status" value="1"/>
</dbReference>
<dbReference type="PROSITE" id="PS01302">
    <property type="entry name" value="UPF0758"/>
    <property type="match status" value="1"/>
</dbReference>
<feature type="chain" id="PRO_1000201881" description="UPF0758 protein SZO_09140">
    <location>
        <begin position="1"/>
        <end position="225"/>
    </location>
</feature>
<feature type="domain" description="MPN" evidence="1">
    <location>
        <begin position="102"/>
        <end position="224"/>
    </location>
</feature>
<feature type="short sequence motif" description="JAMM motif" evidence="1">
    <location>
        <begin position="173"/>
        <end position="186"/>
    </location>
</feature>
<feature type="binding site" evidence="1">
    <location>
        <position position="173"/>
    </location>
    <ligand>
        <name>Zn(2+)</name>
        <dbReference type="ChEBI" id="CHEBI:29105"/>
        <note>catalytic</note>
    </ligand>
</feature>
<feature type="binding site" evidence="1">
    <location>
        <position position="175"/>
    </location>
    <ligand>
        <name>Zn(2+)</name>
        <dbReference type="ChEBI" id="CHEBI:29105"/>
        <note>catalytic</note>
    </ligand>
</feature>
<feature type="binding site" evidence="1">
    <location>
        <position position="186"/>
    </location>
    <ligand>
        <name>Zn(2+)</name>
        <dbReference type="ChEBI" id="CHEBI:29105"/>
        <note>catalytic</note>
    </ligand>
</feature>
<accession>C0MEY7</accession>